<accession>Q4R4P9</accession>
<keyword id="KW-0067">ATP-binding</keyword>
<keyword id="KW-1003">Cell membrane</keyword>
<keyword id="KW-0963">Cytoplasm</keyword>
<keyword id="KW-0968">Cytoplasmic vesicle</keyword>
<keyword id="KW-0256">Endoplasmic reticulum</keyword>
<keyword id="KW-0276">Fatty acid metabolism</keyword>
<keyword id="KW-0436">Ligase</keyword>
<keyword id="KW-0443">Lipid metabolism</keyword>
<keyword id="KW-0472">Membrane</keyword>
<keyword id="KW-0492">Microsome</keyword>
<keyword id="KW-0547">Nucleotide-binding</keyword>
<keyword id="KW-0597">Phosphoprotein</keyword>
<keyword id="KW-1185">Reference proteome</keyword>
<dbReference type="EC" id="6.2.1.3" evidence="3"/>
<dbReference type="EMBL" id="AB169845">
    <property type="protein sequence ID" value="BAE01926.1"/>
    <property type="status" value="ALT_FRAME"/>
    <property type="molecule type" value="mRNA"/>
</dbReference>
<dbReference type="SMR" id="Q4R4P9"/>
<dbReference type="STRING" id="9541.ENSMFAP00000006693"/>
<dbReference type="eggNOG" id="KOG1256">
    <property type="taxonomic scope" value="Eukaryota"/>
</dbReference>
<dbReference type="Proteomes" id="UP000233100">
    <property type="component" value="Unplaced"/>
</dbReference>
<dbReference type="GO" id="GO:0031410">
    <property type="term" value="C:cytoplasmic vesicle"/>
    <property type="evidence" value="ECO:0007669"/>
    <property type="project" value="UniProtKB-KW"/>
</dbReference>
<dbReference type="GO" id="GO:0005783">
    <property type="term" value="C:endoplasmic reticulum"/>
    <property type="evidence" value="ECO:0000250"/>
    <property type="project" value="UniProtKB"/>
</dbReference>
<dbReference type="GO" id="GO:0005886">
    <property type="term" value="C:plasma membrane"/>
    <property type="evidence" value="ECO:0000250"/>
    <property type="project" value="UniProtKB"/>
</dbReference>
<dbReference type="GO" id="GO:0005524">
    <property type="term" value="F:ATP binding"/>
    <property type="evidence" value="ECO:0007669"/>
    <property type="project" value="UniProtKB-KW"/>
</dbReference>
<dbReference type="GO" id="GO:0004467">
    <property type="term" value="F:long-chain fatty acid-CoA ligase activity"/>
    <property type="evidence" value="ECO:0000250"/>
    <property type="project" value="UniProtKB"/>
</dbReference>
<dbReference type="CDD" id="cd05933">
    <property type="entry name" value="ACSBG_like"/>
    <property type="match status" value="1"/>
</dbReference>
<dbReference type="FunFam" id="3.40.50.12780:FF:000021">
    <property type="entry name" value="Long-chain-fatty-acid--CoA ligase ACSBG1 isoform 1"/>
    <property type="match status" value="1"/>
</dbReference>
<dbReference type="FunFam" id="3.40.50.12780:FF:000023">
    <property type="entry name" value="Long-chain-fatty-acid--CoA ligase ACSBG1 isoform 1"/>
    <property type="match status" value="1"/>
</dbReference>
<dbReference type="Gene3D" id="3.40.50.12780">
    <property type="entry name" value="N-terminal domain of ligase-like"/>
    <property type="match status" value="2"/>
</dbReference>
<dbReference type="InterPro" id="IPR020845">
    <property type="entry name" value="AMP-binding_CS"/>
</dbReference>
<dbReference type="InterPro" id="IPR000873">
    <property type="entry name" value="AMP-dep_synth/lig_dom"/>
</dbReference>
<dbReference type="InterPro" id="IPR042099">
    <property type="entry name" value="ANL_N_sf"/>
</dbReference>
<dbReference type="PANTHER" id="PTHR43272:SF93">
    <property type="entry name" value="ACYL-COA SYNTHETASE BUBBLEGUM FAMILY MEMBER 1"/>
    <property type="match status" value="1"/>
</dbReference>
<dbReference type="PANTHER" id="PTHR43272">
    <property type="entry name" value="LONG-CHAIN-FATTY-ACID--COA LIGASE"/>
    <property type="match status" value="1"/>
</dbReference>
<dbReference type="Pfam" id="PF00501">
    <property type="entry name" value="AMP-binding"/>
    <property type="match status" value="1"/>
</dbReference>
<dbReference type="Pfam" id="PF23562">
    <property type="entry name" value="AMP-binding_C_3"/>
    <property type="match status" value="1"/>
</dbReference>
<dbReference type="SUPFAM" id="SSF56801">
    <property type="entry name" value="Acetyl-CoA synthetase-like"/>
    <property type="match status" value="1"/>
</dbReference>
<dbReference type="PROSITE" id="PS00455">
    <property type="entry name" value="AMP_BINDING"/>
    <property type="match status" value="1"/>
</dbReference>
<organism>
    <name type="scientific">Macaca fascicularis</name>
    <name type="common">Crab-eating macaque</name>
    <name type="synonym">Cynomolgus monkey</name>
    <dbReference type="NCBI Taxonomy" id="9541"/>
    <lineage>
        <taxon>Eukaryota</taxon>
        <taxon>Metazoa</taxon>
        <taxon>Chordata</taxon>
        <taxon>Craniata</taxon>
        <taxon>Vertebrata</taxon>
        <taxon>Euteleostomi</taxon>
        <taxon>Mammalia</taxon>
        <taxon>Eutheria</taxon>
        <taxon>Euarchontoglires</taxon>
        <taxon>Primates</taxon>
        <taxon>Haplorrhini</taxon>
        <taxon>Catarrhini</taxon>
        <taxon>Cercopithecidae</taxon>
        <taxon>Cercopithecinae</taxon>
        <taxon>Macaca</taxon>
    </lineage>
</organism>
<sequence length="724" mass="80998">MPRNSGAGYGCPHGDPSMLDSRETPQESRQDMTVGTTQEKLKTSSLTDRQPLSKESLNHALKLSVPEKVNNAQWDAPEEALWTTRADGRVRLRIDPSCPQLPYTVHRMFYEALDKYGDFSALGFKCQDKWEHISYSQYYLLARRAAKGFLKLGLERAHSVAILGFNSPEWFFSAVGTVFAGGIVTGIYTTSSPEACQYIAYDCCANVIMVDTQKQLEKILKVWKQLPHLKAVVIYKEPPPNKMANVYTMEEFMELGNEVPEEALDAIIDTQQPNQCCVLVYTSGTTGNPKGVMLSQDNITWTARYGSQAGDIRPAEVQQEVVVSYLPLSHIAAQIYDLWTGIQWGAQVCFAEPDALKGSLVNTLREVEPTSHMGVPRVWEKIMERIQEVAAQSGFIRRKMLLWAMSVTLEQNLTCPGSDLKPFTTRLADYLVLAKVRQALGFAKCQKNFYGAAPMTAETQHFFLGLNIRLYAGYGLSETSGPHFMSSPCNYRLYSSGKLVPGCRVKLVNQDTEGIGEICLWGRTIFMGYLNMEDKTCEAIDEEGWLHTGDAGRLDADGFLYITGRLKELIITAGGENVPPVPIEEAVKMELPIISNAMLIGTDQRKFLSMLLTLKCTLDPDTSDPTDNLTEQAVEFCQRVGSRATTVSEIVGKDEAVYQAIEEGIRRVNMNAAARPYHIQKWAILERDFSISGGELGPTMKLKRLTVLEKYKDIIDSFYREQKM</sequence>
<protein>
    <recommendedName>
        <fullName evidence="3">Long-chain-fatty-acid--CoA ligase ACSBG1</fullName>
        <ecNumber evidence="3">6.2.1.3</ecNumber>
    </recommendedName>
    <alternativeName>
        <fullName>Acyl-CoA synthetase bubblegum family member 1</fullName>
    </alternativeName>
</protein>
<evidence type="ECO:0000250" key="1"/>
<evidence type="ECO:0000250" key="2">
    <source>
        <dbReference type="UniProtKB" id="Q924N5"/>
    </source>
</evidence>
<evidence type="ECO:0000250" key="3">
    <source>
        <dbReference type="UniProtKB" id="Q96GR2"/>
    </source>
</evidence>
<evidence type="ECO:0000250" key="4">
    <source>
        <dbReference type="UniProtKB" id="Q99PU5"/>
    </source>
</evidence>
<evidence type="ECO:0000256" key="5">
    <source>
        <dbReference type="SAM" id="MobiDB-lite"/>
    </source>
</evidence>
<evidence type="ECO:0000305" key="6"/>
<proteinExistence type="evidence at transcript level"/>
<feature type="chain" id="PRO_0000315809" description="Long-chain-fatty-acid--CoA ligase ACSBG1">
    <location>
        <begin position="1"/>
        <end position="724"/>
    </location>
</feature>
<feature type="region of interest" description="Disordered" evidence="5">
    <location>
        <begin position="1"/>
        <end position="51"/>
    </location>
</feature>
<feature type="compositionally biased region" description="Basic and acidic residues" evidence="5">
    <location>
        <begin position="20"/>
        <end position="30"/>
    </location>
</feature>
<feature type="compositionally biased region" description="Polar residues" evidence="5">
    <location>
        <begin position="31"/>
        <end position="51"/>
    </location>
</feature>
<feature type="binding site" evidence="1">
    <location>
        <begin position="282"/>
        <end position="290"/>
    </location>
    <ligand>
        <name>ATP</name>
        <dbReference type="ChEBI" id="CHEBI:30616"/>
    </ligand>
</feature>
<feature type="binding site" evidence="1">
    <location>
        <begin position="472"/>
        <end position="477"/>
    </location>
    <ligand>
        <name>ATP</name>
        <dbReference type="ChEBI" id="CHEBI:30616"/>
    </ligand>
</feature>
<feature type="binding site" evidence="1">
    <location>
        <position position="550"/>
    </location>
    <ligand>
        <name>ATP</name>
        <dbReference type="ChEBI" id="CHEBI:30616"/>
    </ligand>
</feature>
<feature type="binding site" evidence="1">
    <location>
        <position position="565"/>
    </location>
    <ligand>
        <name>ATP</name>
        <dbReference type="ChEBI" id="CHEBI:30616"/>
    </ligand>
</feature>
<feature type="binding site" evidence="1">
    <location>
        <position position="701"/>
    </location>
    <ligand>
        <name>ATP</name>
        <dbReference type="ChEBI" id="CHEBI:30616"/>
    </ligand>
</feature>
<feature type="modified residue" description="Phosphoserine" evidence="2">
    <location>
        <position position="53"/>
    </location>
</feature>
<feature type="modified residue" description="Phosphoserine" evidence="4">
    <location>
        <position position="56"/>
    </location>
</feature>
<feature type="modified residue" description="Phosphotyrosine" evidence="4">
    <location>
        <position position="658"/>
    </location>
</feature>
<name>ACBG1_MACFA</name>
<gene>
    <name evidence="3" type="primary">ACSBG1</name>
    <name type="ORF">QtrA-12214</name>
</gene>
<reference key="1">
    <citation type="submission" date="2005-06" db="EMBL/GenBank/DDBJ databases">
        <title>DNA sequences of macaque genes expressed in brain or testis and its evolutionary implications.</title>
        <authorList>
            <consortium name="International consortium for macaque cDNA sequencing and analysis"/>
        </authorList>
    </citation>
    <scope>NUCLEOTIDE SEQUENCE [LARGE SCALE MRNA]</scope>
    <source>
        <tissue>Temporal cortex</tissue>
    </source>
</reference>
<comment type="function">
    <text evidence="3">Catalyzes the conversion of fatty acids such as long-chain and very long-chain fatty acids to their active form acyl-CoAs for both synthesis of cellular lipids, and degradation via beta-oxidation. Can activate diverse saturated, monosaturated and polyunsaturated fatty acids.</text>
</comment>
<comment type="catalytic activity">
    <reaction evidence="3">
        <text>a long-chain fatty acid + ATP + CoA = a long-chain fatty acyl-CoA + AMP + diphosphate</text>
        <dbReference type="Rhea" id="RHEA:15421"/>
        <dbReference type="ChEBI" id="CHEBI:30616"/>
        <dbReference type="ChEBI" id="CHEBI:33019"/>
        <dbReference type="ChEBI" id="CHEBI:57287"/>
        <dbReference type="ChEBI" id="CHEBI:57560"/>
        <dbReference type="ChEBI" id="CHEBI:83139"/>
        <dbReference type="ChEBI" id="CHEBI:456215"/>
        <dbReference type="EC" id="6.2.1.3"/>
    </reaction>
</comment>
<comment type="catalytic activity">
    <reaction evidence="3">
        <text>(E)-hexadec-2-enoate + ATP + CoA = (2E)-hexadecenoyl-CoA + AMP + diphosphate</text>
        <dbReference type="Rhea" id="RHEA:36139"/>
        <dbReference type="ChEBI" id="CHEBI:30616"/>
        <dbReference type="ChEBI" id="CHEBI:33019"/>
        <dbReference type="ChEBI" id="CHEBI:57287"/>
        <dbReference type="ChEBI" id="CHEBI:61526"/>
        <dbReference type="ChEBI" id="CHEBI:72745"/>
        <dbReference type="ChEBI" id="CHEBI:456215"/>
    </reaction>
</comment>
<comment type="catalytic activity">
    <reaction evidence="3">
        <text>hexadecanoate + ATP + CoA = hexadecanoyl-CoA + AMP + diphosphate</text>
        <dbReference type="Rhea" id="RHEA:30751"/>
        <dbReference type="ChEBI" id="CHEBI:7896"/>
        <dbReference type="ChEBI" id="CHEBI:30616"/>
        <dbReference type="ChEBI" id="CHEBI:33019"/>
        <dbReference type="ChEBI" id="CHEBI:57287"/>
        <dbReference type="ChEBI" id="CHEBI:57379"/>
        <dbReference type="ChEBI" id="CHEBI:456215"/>
    </reaction>
</comment>
<comment type="subcellular location">
    <subcellularLocation>
        <location evidence="3">Cytoplasm</location>
    </subcellularLocation>
    <subcellularLocation>
        <location evidence="1">Cytoplasmic vesicle</location>
    </subcellularLocation>
    <subcellularLocation>
        <location evidence="1">Microsome</location>
    </subcellularLocation>
    <subcellularLocation>
        <location evidence="3">Endoplasmic reticulum</location>
    </subcellularLocation>
    <subcellularLocation>
        <location evidence="3">Cell membrane</location>
    </subcellularLocation>
</comment>
<comment type="similarity">
    <text evidence="6">Belongs to the ATP-dependent AMP-binding enzyme family. Bubblegum subfamily.</text>
</comment>
<comment type="sequence caution" evidence="6">
    <conflict type="frameshift">
        <sequence resource="EMBL-CDS" id="BAE01926"/>
    </conflict>
</comment>